<comment type="function">
    <text evidence="3">(Microbial infection) Modulates replication of Zika virus in salivary glands.</text>
</comment>
<comment type="function">
    <text evidence="3">(Microbial infection) Modulates replication of dengue virus type 2 in salivary glands.</text>
</comment>
<comment type="function">
    <text evidence="3">(Microbial infection) Modulates replication of chikungunya virus in salivary glands.</text>
</comment>
<comment type="subcellular location">
    <subcellularLocation>
        <location evidence="1">Membrane</location>
        <topology evidence="1">Single-pass membrane protein</topology>
    </subcellularLocation>
</comment>
<comment type="tissue specificity">
    <text evidence="3">Salivary gland (at protein level).</text>
</comment>
<comment type="induction">
    <text evidence="3">(Microbial infection) Up-regulated in salivary glands following infection with dengue virus type 2, Zika or chikungunya viruses (at protein level).</text>
</comment>
<comment type="disruption phenotype">
    <text evidence="3">(Microbial infection) RNAi-mediated knockdown results in higher levels of Zika virus replication in salivary glands after infection.</text>
</comment>
<comment type="disruption phenotype">
    <text evidence="3">(Microbial infection) RNAi-mediated knockdown results in higher levels of dengue virus type 2 replication in salivary glands after infection.</text>
</comment>
<comment type="disruption phenotype">
    <text evidence="3">(Microbial infection) RNAi-mediated knockdown results in higher levels of chikungunya virus replication in salivary glands after infection.</text>
</comment>
<organism evidence="6">
    <name type="scientific">Aedes aegypti</name>
    <name type="common">Yellowfever mosquito</name>
    <name type="synonym">Culex aegypti</name>
    <dbReference type="NCBI Taxonomy" id="7159"/>
    <lineage>
        <taxon>Eukaryota</taxon>
        <taxon>Metazoa</taxon>
        <taxon>Ecdysozoa</taxon>
        <taxon>Arthropoda</taxon>
        <taxon>Hexapoda</taxon>
        <taxon>Insecta</taxon>
        <taxon>Pterygota</taxon>
        <taxon>Neoptera</taxon>
        <taxon>Endopterygota</taxon>
        <taxon>Diptera</taxon>
        <taxon>Nematocera</taxon>
        <taxon>Culicoidea</taxon>
        <taxon>Culicidae</taxon>
        <taxon>Culicinae</taxon>
        <taxon>Aedini</taxon>
        <taxon>Aedes</taxon>
        <taxon>Stegomyia</taxon>
    </lineage>
</organism>
<protein>
    <recommendedName>
        <fullName evidence="4">Salivary gland broad-spectrum antiviral protein</fullName>
        <shortName evidence="4">SGBAP</shortName>
    </recommendedName>
</protein>
<keyword id="KW-0930">Antiviral protein</keyword>
<keyword id="KW-0325">Glycoprotein</keyword>
<keyword id="KW-0472">Membrane</keyword>
<keyword id="KW-1185">Reference proteome</keyword>
<keyword id="KW-0812">Transmembrane</keyword>
<keyword id="KW-1133">Transmembrane helix</keyword>
<accession>A0A903V9Z8</accession>
<name>SGBAP_AEDAE</name>
<feature type="chain" id="PRO_0000461336" description="Salivary gland broad-spectrum antiviral protein">
    <location>
        <begin position="1"/>
        <end position="160"/>
    </location>
</feature>
<feature type="transmembrane region" description="Helical" evidence="1">
    <location>
        <begin position="17"/>
        <end position="37"/>
    </location>
</feature>
<feature type="glycosylation site" description="N-linked (GlcNAc...) asparagine" evidence="2">
    <location>
        <position position="62"/>
    </location>
</feature>
<feature type="glycosylation site" description="N-linked (GlcNAc...) asparagine" evidence="2">
    <location>
        <position position="145"/>
    </location>
</feature>
<evidence type="ECO:0000255" key="1"/>
<evidence type="ECO:0000255" key="2">
    <source>
        <dbReference type="PROSITE-ProRule" id="PRU00498"/>
    </source>
</evidence>
<evidence type="ECO:0000269" key="3">
    <source>
    </source>
</evidence>
<evidence type="ECO:0000303" key="4">
    <source>
    </source>
</evidence>
<evidence type="ECO:0000305" key="5"/>
<evidence type="ECO:0000312" key="6">
    <source>
        <dbReference type="Proteomes" id="UP000008820"/>
    </source>
</evidence>
<proteinExistence type="evidence at protein level"/>
<dbReference type="RefSeq" id="XP_021694984.1">
    <property type="nucleotide sequence ID" value="XM_021839292.1"/>
</dbReference>
<dbReference type="SMR" id="A0A903V9Z8"/>
<dbReference type="EnsemblMetazoa" id="AAEL019996-RA">
    <property type="protein sequence ID" value="AAEL019996-PA"/>
    <property type="gene ID" value="AAEL019996"/>
</dbReference>
<dbReference type="GeneID" id="5578629"/>
<dbReference type="Proteomes" id="UP000008820">
    <property type="component" value="Chromosome 1"/>
</dbReference>
<dbReference type="GO" id="GO:0016020">
    <property type="term" value="C:membrane"/>
    <property type="evidence" value="ECO:0007669"/>
    <property type="project" value="UniProtKB-SubCell"/>
</dbReference>
<dbReference type="GO" id="GO:0050688">
    <property type="term" value="P:regulation of defense response to virus"/>
    <property type="evidence" value="ECO:0007669"/>
    <property type="project" value="UniProtKB-KW"/>
</dbReference>
<reference evidence="6" key="1">
    <citation type="journal article" date="2018" name="Nature">
        <title>Improved reference genome of Aedes aegypti informs arbovirus vector control.</title>
        <authorList>
            <person name="Matthews B.J."/>
            <person name="Dudchenko O."/>
            <person name="Kingan S.B."/>
            <person name="Koren S."/>
            <person name="Antoshechkin I."/>
            <person name="Crawford J.E."/>
            <person name="Glassford W.J."/>
            <person name="Herre M."/>
            <person name="Redmond S.N."/>
            <person name="Rose N.H."/>
            <person name="Weedall G.D."/>
            <person name="Wu Y."/>
            <person name="Batra S.S."/>
            <person name="Brito-Sierra C.A."/>
            <person name="Buckingham S.D."/>
            <person name="Campbell C.L."/>
            <person name="Chan S."/>
            <person name="Cox E."/>
            <person name="Evans B.R."/>
            <person name="Fansiri T."/>
            <person name="Filipovic I."/>
            <person name="Fontaine A."/>
            <person name="Gloria-Soria A."/>
            <person name="Hall R."/>
            <person name="Joardar V.S."/>
            <person name="Jones A.K."/>
            <person name="Kay R.G.G."/>
            <person name="Kodali V.K."/>
            <person name="Lee J."/>
            <person name="Lycett G.J."/>
            <person name="Mitchell S.N."/>
            <person name="Muehling J."/>
            <person name="Murphy M.R."/>
            <person name="Omer A.D."/>
            <person name="Partridge F.A."/>
            <person name="Peluso P."/>
            <person name="Aiden A.P."/>
            <person name="Ramasamy V."/>
            <person name="Rasic G."/>
            <person name="Roy S."/>
            <person name="Saavedra-Rodriguez K."/>
            <person name="Sharan S."/>
            <person name="Sharma A."/>
            <person name="Smith M.L."/>
            <person name="Turner J."/>
            <person name="Weakley A.M."/>
            <person name="Zhao Z."/>
            <person name="Akbari O.S."/>
            <person name="Black W.C. IV"/>
            <person name="Cao H."/>
            <person name="Darby A.C."/>
            <person name="Hill C.A."/>
            <person name="Johnston J.S."/>
            <person name="Murphy T.D."/>
            <person name="Raikhel A.S."/>
            <person name="Sattelle D.B."/>
            <person name="Sharakhov I.V."/>
            <person name="White B.J."/>
            <person name="Zhao L."/>
            <person name="Aiden E.L."/>
            <person name="Mann R.S."/>
            <person name="Lambrechts L."/>
            <person name="Powell J.R."/>
            <person name="Sharakhova M.V."/>
            <person name="Tu Z."/>
            <person name="Robertson H.M."/>
            <person name="McBride C.S."/>
            <person name="Hastie A.R."/>
            <person name="Korlach J."/>
            <person name="Neafsey D.E."/>
            <person name="Phillippy A.M."/>
            <person name="Vosshall L.B."/>
        </authorList>
    </citation>
    <scope>NUCLEOTIDE SEQUENCE [LARGE SCALE GENOMIC DNA]</scope>
    <source>
        <strain evidence="6">LVP_AGWG</strain>
    </source>
</reference>
<reference evidence="5" key="2">
    <citation type="journal article" date="2021" name="Sci. Rep.">
        <title>High resolution proteomics of Aedes aegypti salivary glands infected with either dengue, Zika or chikungunya viruses identify new virus specific and broad antiviral factors.</title>
        <authorList>
            <person name="Chowdhury A."/>
            <person name="Modahl C.M."/>
            <person name="Misse D."/>
            <person name="Kini R.M."/>
            <person name="Pompon J."/>
        </authorList>
    </citation>
    <scope>IDENTIFICATION BY MASS SPECTROMETRY</scope>
    <scope>FUNCTION (MICROBIAL INFECTION)</scope>
    <scope>TISSUE SPECIFICITY</scope>
    <scope>INDUCTION (MICROBIAL INFECTION)</scope>
    <scope>DISRUPTION PHENOTYPE (MICROBIAL INFECTION)</scope>
</reference>
<sequence>MDSAASHSVACHSTKMVALGLYFTVVVFVLFITSVNLQSPATKTEKTPKISRLYFGTLEYVNATKDQELIDGVFDAILKRLNKLDVDNPHEKNVGRYDMTTLLCWAVNNDLLYRKYGENMEVIFQLAKKFYPERDDKDKDSLGINRSLGTSKLLKWELHG</sequence>